<organism>
    <name type="scientific">Helicobacter pylori (strain ATCC 700392 / 26695)</name>
    <name type="common">Campylobacter pylori</name>
    <dbReference type="NCBI Taxonomy" id="85962"/>
    <lineage>
        <taxon>Bacteria</taxon>
        <taxon>Pseudomonadati</taxon>
        <taxon>Campylobacterota</taxon>
        <taxon>Epsilonproteobacteria</taxon>
        <taxon>Campylobacterales</taxon>
        <taxon>Helicobacteraceae</taxon>
        <taxon>Helicobacter</taxon>
    </lineage>
</organism>
<sequence length="142" mass="16971">MRHYETMFILKPTLVEEEIKSKIEFYKEVITKHHGVIETSLDMGMRNLAYEIKKHKRGYYYVAYFKAEPSMIVELERLYRINEDVLRFIVIKYESKKEVEAWHALVDRANKKPSHAKEKHEKTEHTHSHHTEEAESVGSHSE</sequence>
<dbReference type="EMBL" id="AE000511">
    <property type="protein sequence ID" value="AAD08292.1"/>
    <property type="molecule type" value="Genomic_DNA"/>
</dbReference>
<dbReference type="PIR" id="F64675">
    <property type="entry name" value="F64675"/>
</dbReference>
<dbReference type="RefSeq" id="NP_208038.1">
    <property type="nucleotide sequence ID" value="NC_000915.1"/>
</dbReference>
<dbReference type="RefSeq" id="WP_001216713.1">
    <property type="nucleotide sequence ID" value="NC_018939.1"/>
</dbReference>
<dbReference type="SMR" id="P56013"/>
<dbReference type="DIP" id="DIP-3684N"/>
<dbReference type="FunCoup" id="P56013">
    <property type="interactions" value="378"/>
</dbReference>
<dbReference type="IntAct" id="P56013">
    <property type="interactions" value="7"/>
</dbReference>
<dbReference type="MINT" id="P56013"/>
<dbReference type="STRING" id="85962.HP_1246"/>
<dbReference type="PaxDb" id="85962-C694_06440"/>
<dbReference type="DNASU" id="898775"/>
<dbReference type="EnsemblBacteria" id="AAD08292">
    <property type="protein sequence ID" value="AAD08292"/>
    <property type="gene ID" value="HP_1246"/>
</dbReference>
<dbReference type="KEGG" id="heo:C694_06440"/>
<dbReference type="KEGG" id="hpy:HP_1246"/>
<dbReference type="PATRIC" id="fig|85962.47.peg.1338"/>
<dbReference type="eggNOG" id="COG0360">
    <property type="taxonomic scope" value="Bacteria"/>
</dbReference>
<dbReference type="InParanoid" id="P56013"/>
<dbReference type="OrthoDB" id="9812702at2"/>
<dbReference type="PhylomeDB" id="P56013"/>
<dbReference type="Proteomes" id="UP000000429">
    <property type="component" value="Chromosome"/>
</dbReference>
<dbReference type="GO" id="GO:0022627">
    <property type="term" value="C:cytosolic small ribosomal subunit"/>
    <property type="evidence" value="ECO:0000318"/>
    <property type="project" value="GO_Central"/>
</dbReference>
<dbReference type="GO" id="GO:0070181">
    <property type="term" value="F:small ribosomal subunit rRNA binding"/>
    <property type="evidence" value="ECO:0000318"/>
    <property type="project" value="GO_Central"/>
</dbReference>
<dbReference type="GO" id="GO:0003735">
    <property type="term" value="F:structural constituent of ribosome"/>
    <property type="evidence" value="ECO:0000318"/>
    <property type="project" value="GO_Central"/>
</dbReference>
<dbReference type="GO" id="GO:0006412">
    <property type="term" value="P:translation"/>
    <property type="evidence" value="ECO:0007669"/>
    <property type="project" value="UniProtKB-UniRule"/>
</dbReference>
<dbReference type="CDD" id="cd00473">
    <property type="entry name" value="bS6"/>
    <property type="match status" value="1"/>
</dbReference>
<dbReference type="FunFam" id="3.30.70.60:FF:000010">
    <property type="entry name" value="30S ribosomal protein S6"/>
    <property type="match status" value="1"/>
</dbReference>
<dbReference type="Gene3D" id="3.30.70.60">
    <property type="match status" value="1"/>
</dbReference>
<dbReference type="HAMAP" id="MF_00360">
    <property type="entry name" value="Ribosomal_bS6"/>
    <property type="match status" value="1"/>
</dbReference>
<dbReference type="InterPro" id="IPR000529">
    <property type="entry name" value="Ribosomal_bS6"/>
</dbReference>
<dbReference type="InterPro" id="IPR020815">
    <property type="entry name" value="Ribosomal_bS6_CS"/>
</dbReference>
<dbReference type="InterPro" id="IPR035980">
    <property type="entry name" value="Ribosomal_bS6_sf"/>
</dbReference>
<dbReference type="InterPro" id="IPR020814">
    <property type="entry name" value="Ribosomal_S6_plastid/chlpt"/>
</dbReference>
<dbReference type="InterPro" id="IPR014717">
    <property type="entry name" value="Transl_elong_EF1B/ribsomal_bS6"/>
</dbReference>
<dbReference type="NCBIfam" id="TIGR00166">
    <property type="entry name" value="S6"/>
    <property type="match status" value="1"/>
</dbReference>
<dbReference type="PANTHER" id="PTHR21011">
    <property type="entry name" value="MITOCHONDRIAL 28S RIBOSOMAL PROTEIN S6"/>
    <property type="match status" value="1"/>
</dbReference>
<dbReference type="PANTHER" id="PTHR21011:SF1">
    <property type="entry name" value="SMALL RIBOSOMAL SUBUNIT PROTEIN BS6M"/>
    <property type="match status" value="1"/>
</dbReference>
<dbReference type="Pfam" id="PF01250">
    <property type="entry name" value="Ribosomal_S6"/>
    <property type="match status" value="1"/>
</dbReference>
<dbReference type="SUPFAM" id="SSF54995">
    <property type="entry name" value="Ribosomal protein S6"/>
    <property type="match status" value="1"/>
</dbReference>
<dbReference type="PROSITE" id="PS01048">
    <property type="entry name" value="RIBOSOMAL_S6"/>
    <property type="match status" value="1"/>
</dbReference>
<feature type="chain" id="PRO_0000176776" description="Small ribosomal subunit protein bS6">
    <location>
        <begin position="1"/>
        <end position="142"/>
    </location>
</feature>
<feature type="region of interest" description="Disordered" evidence="2">
    <location>
        <begin position="110"/>
        <end position="142"/>
    </location>
</feature>
<feature type="compositionally biased region" description="Basic and acidic residues" evidence="2">
    <location>
        <begin position="110"/>
        <end position="133"/>
    </location>
</feature>
<protein>
    <recommendedName>
        <fullName evidence="3">Small ribosomal subunit protein bS6</fullName>
    </recommendedName>
    <alternativeName>
        <fullName>30S ribosomal protein S6</fullName>
    </alternativeName>
</protein>
<gene>
    <name type="primary">rpsF</name>
    <name type="ordered locus">HP_1246</name>
</gene>
<name>RS6_HELPY</name>
<reference key="1">
    <citation type="journal article" date="1997" name="Nature">
        <title>The complete genome sequence of the gastric pathogen Helicobacter pylori.</title>
        <authorList>
            <person name="Tomb J.-F."/>
            <person name="White O."/>
            <person name="Kerlavage A.R."/>
            <person name="Clayton R.A."/>
            <person name="Sutton G.G."/>
            <person name="Fleischmann R.D."/>
            <person name="Ketchum K.A."/>
            <person name="Klenk H.-P."/>
            <person name="Gill S.R."/>
            <person name="Dougherty B.A."/>
            <person name="Nelson K.E."/>
            <person name="Quackenbush J."/>
            <person name="Zhou L."/>
            <person name="Kirkness E.F."/>
            <person name="Peterson S.N."/>
            <person name="Loftus B.J."/>
            <person name="Richardson D.L."/>
            <person name="Dodson R.J."/>
            <person name="Khalak H.G."/>
            <person name="Glodek A."/>
            <person name="McKenney K."/>
            <person name="FitzGerald L.M."/>
            <person name="Lee N."/>
            <person name="Adams M.D."/>
            <person name="Hickey E.K."/>
            <person name="Berg D.E."/>
            <person name="Gocayne J.D."/>
            <person name="Utterback T.R."/>
            <person name="Peterson J.D."/>
            <person name="Kelley J.M."/>
            <person name="Cotton M.D."/>
            <person name="Weidman J.F."/>
            <person name="Fujii C."/>
            <person name="Bowman C."/>
            <person name="Watthey L."/>
            <person name="Wallin E."/>
            <person name="Hayes W.S."/>
            <person name="Borodovsky M."/>
            <person name="Karp P.D."/>
            <person name="Smith H.O."/>
            <person name="Fraser C.M."/>
            <person name="Venter J.C."/>
        </authorList>
    </citation>
    <scope>NUCLEOTIDE SEQUENCE [LARGE SCALE GENOMIC DNA]</scope>
    <source>
        <strain>ATCC 700392 / 26695</strain>
    </source>
</reference>
<accession>P56013</accession>
<proteinExistence type="evidence at protein level"/>
<keyword id="KW-1185">Reference proteome</keyword>
<keyword id="KW-0687">Ribonucleoprotein</keyword>
<keyword id="KW-0689">Ribosomal protein</keyword>
<keyword id="KW-0694">RNA-binding</keyword>
<keyword id="KW-0699">rRNA-binding</keyword>
<evidence type="ECO:0000250" key="1"/>
<evidence type="ECO:0000256" key="2">
    <source>
        <dbReference type="SAM" id="MobiDB-lite"/>
    </source>
</evidence>
<evidence type="ECO:0000305" key="3"/>
<comment type="function">
    <text evidence="1">Binds together with bS18 to 16S ribosomal RNA.</text>
</comment>
<comment type="interaction">
    <interactant intactId="EBI-7719651">
        <id>P56013</id>
    </interactant>
    <interactant intactId="EBI-7719400">
        <id>P66459</id>
        <label>rpsR</label>
    </interactant>
    <organismsDiffer>false</organismsDiffer>
    <experiments>4</experiments>
</comment>
<comment type="similarity">
    <text evidence="3">Belongs to the bacterial ribosomal protein bS6 family.</text>
</comment>